<reference key="1">
    <citation type="journal article" date="2002" name="Nature">
        <title>Complete genome sequence of the model actinomycete Streptomyces coelicolor A3(2).</title>
        <authorList>
            <person name="Bentley S.D."/>
            <person name="Chater K.F."/>
            <person name="Cerdeno-Tarraga A.-M."/>
            <person name="Challis G.L."/>
            <person name="Thomson N.R."/>
            <person name="James K.D."/>
            <person name="Harris D.E."/>
            <person name="Quail M.A."/>
            <person name="Kieser H."/>
            <person name="Harper D."/>
            <person name="Bateman A."/>
            <person name="Brown S."/>
            <person name="Chandra G."/>
            <person name="Chen C.W."/>
            <person name="Collins M."/>
            <person name="Cronin A."/>
            <person name="Fraser A."/>
            <person name="Goble A."/>
            <person name="Hidalgo J."/>
            <person name="Hornsby T."/>
            <person name="Howarth S."/>
            <person name="Huang C.-H."/>
            <person name="Kieser T."/>
            <person name="Larke L."/>
            <person name="Murphy L.D."/>
            <person name="Oliver K."/>
            <person name="O'Neil S."/>
            <person name="Rabbinowitsch E."/>
            <person name="Rajandream M.A."/>
            <person name="Rutherford K.M."/>
            <person name="Rutter S."/>
            <person name="Seeger K."/>
            <person name="Saunders D."/>
            <person name="Sharp S."/>
            <person name="Squares R."/>
            <person name="Squares S."/>
            <person name="Taylor K."/>
            <person name="Warren T."/>
            <person name="Wietzorrek A."/>
            <person name="Woodward J.R."/>
            <person name="Barrell B.G."/>
            <person name="Parkhill J."/>
            <person name="Hopwood D.A."/>
        </authorList>
    </citation>
    <scope>NUCLEOTIDE SEQUENCE [LARGE SCALE GENOMIC DNA]</scope>
    <source>
        <strain>ATCC BAA-471 / A3(2) / M145</strain>
    </source>
</reference>
<evidence type="ECO:0000250" key="1"/>
<evidence type="ECO:0000305" key="2"/>
<dbReference type="EC" id="2.6.1.42"/>
<dbReference type="EMBL" id="AL939124">
    <property type="protein sequence ID" value="CAA19971.1"/>
    <property type="molecule type" value="Genomic_DNA"/>
</dbReference>
<dbReference type="PIR" id="T29053">
    <property type="entry name" value="T29053"/>
</dbReference>
<dbReference type="RefSeq" id="NP_629657.1">
    <property type="nucleotide sequence ID" value="NC_003888.3"/>
</dbReference>
<dbReference type="RefSeq" id="WP_011030291.1">
    <property type="nucleotide sequence ID" value="NZ_VNID01000011.1"/>
</dbReference>
<dbReference type="SMR" id="O86505"/>
<dbReference type="FunCoup" id="O86505">
    <property type="interactions" value="422"/>
</dbReference>
<dbReference type="STRING" id="100226.gene:17763175"/>
<dbReference type="PaxDb" id="100226-SCO5523"/>
<dbReference type="KEGG" id="sco:SCO5523"/>
<dbReference type="PATRIC" id="fig|100226.15.peg.5610"/>
<dbReference type="eggNOG" id="COG0115">
    <property type="taxonomic scope" value="Bacteria"/>
</dbReference>
<dbReference type="HOGENOM" id="CLU_031922_0_2_11"/>
<dbReference type="InParanoid" id="O86505"/>
<dbReference type="OrthoDB" id="9804984at2"/>
<dbReference type="PhylomeDB" id="O86505"/>
<dbReference type="UniPathway" id="UPA00047">
    <property type="reaction ID" value="UER00058"/>
</dbReference>
<dbReference type="UniPathway" id="UPA00048">
    <property type="reaction ID" value="UER00073"/>
</dbReference>
<dbReference type="UniPathway" id="UPA00049">
    <property type="reaction ID" value="UER00062"/>
</dbReference>
<dbReference type="Proteomes" id="UP000001973">
    <property type="component" value="Chromosome"/>
</dbReference>
<dbReference type="GO" id="GO:0052656">
    <property type="term" value="F:L-isoleucine-2-oxoglutarate transaminase activity"/>
    <property type="evidence" value="ECO:0007669"/>
    <property type="project" value="RHEA"/>
</dbReference>
<dbReference type="GO" id="GO:0052654">
    <property type="term" value="F:L-leucine-2-oxoglutarate transaminase activity"/>
    <property type="evidence" value="ECO:0007669"/>
    <property type="project" value="RHEA"/>
</dbReference>
<dbReference type="GO" id="GO:0052655">
    <property type="term" value="F:L-valine-2-oxoglutarate transaminase activity"/>
    <property type="evidence" value="ECO:0007669"/>
    <property type="project" value="RHEA"/>
</dbReference>
<dbReference type="GO" id="GO:0009097">
    <property type="term" value="P:isoleucine biosynthetic process"/>
    <property type="evidence" value="ECO:0007669"/>
    <property type="project" value="UniProtKB-UniPathway"/>
</dbReference>
<dbReference type="GO" id="GO:0009098">
    <property type="term" value="P:L-leucine biosynthetic process"/>
    <property type="evidence" value="ECO:0007669"/>
    <property type="project" value="UniProtKB-UniPathway"/>
</dbReference>
<dbReference type="GO" id="GO:0009099">
    <property type="term" value="P:L-valine biosynthetic process"/>
    <property type="evidence" value="ECO:0007669"/>
    <property type="project" value="UniProtKB-UniPathway"/>
</dbReference>
<dbReference type="CDD" id="cd01557">
    <property type="entry name" value="BCAT_beta_family"/>
    <property type="match status" value="1"/>
</dbReference>
<dbReference type="Gene3D" id="3.30.470.10">
    <property type="match status" value="1"/>
</dbReference>
<dbReference type="Gene3D" id="3.20.10.10">
    <property type="entry name" value="D-amino Acid Aminotransferase, subunit A, domain 2"/>
    <property type="match status" value="1"/>
</dbReference>
<dbReference type="InterPro" id="IPR001544">
    <property type="entry name" value="Aminotrans_IV"/>
</dbReference>
<dbReference type="InterPro" id="IPR018300">
    <property type="entry name" value="Aminotrans_IV_CS"/>
</dbReference>
<dbReference type="InterPro" id="IPR036038">
    <property type="entry name" value="Aminotransferase-like"/>
</dbReference>
<dbReference type="InterPro" id="IPR005786">
    <property type="entry name" value="B_amino_transII"/>
</dbReference>
<dbReference type="InterPro" id="IPR043132">
    <property type="entry name" value="BCAT-like_C"/>
</dbReference>
<dbReference type="InterPro" id="IPR043131">
    <property type="entry name" value="BCAT-like_N"/>
</dbReference>
<dbReference type="InterPro" id="IPR033939">
    <property type="entry name" value="BCAT_family"/>
</dbReference>
<dbReference type="NCBIfam" id="TIGR01123">
    <property type="entry name" value="ilvE_II"/>
    <property type="match status" value="1"/>
</dbReference>
<dbReference type="NCBIfam" id="NF009897">
    <property type="entry name" value="PRK13357.1"/>
    <property type="match status" value="1"/>
</dbReference>
<dbReference type="PANTHER" id="PTHR11825:SF44">
    <property type="entry name" value="BRANCHED-CHAIN-AMINO-ACID AMINOTRANSFERASE"/>
    <property type="match status" value="1"/>
</dbReference>
<dbReference type="PANTHER" id="PTHR11825">
    <property type="entry name" value="SUBGROUP IIII AMINOTRANSFERASE"/>
    <property type="match status" value="1"/>
</dbReference>
<dbReference type="Pfam" id="PF01063">
    <property type="entry name" value="Aminotran_4"/>
    <property type="match status" value="1"/>
</dbReference>
<dbReference type="PIRSF" id="PIRSF006468">
    <property type="entry name" value="BCAT1"/>
    <property type="match status" value="1"/>
</dbReference>
<dbReference type="SUPFAM" id="SSF56752">
    <property type="entry name" value="D-aminoacid aminotransferase-like PLP-dependent enzymes"/>
    <property type="match status" value="1"/>
</dbReference>
<dbReference type="PROSITE" id="PS00770">
    <property type="entry name" value="AA_TRANSFER_CLASS_4"/>
    <property type="match status" value="1"/>
</dbReference>
<name>ILVE_STRCO</name>
<accession>O86505</accession>
<proteinExistence type="inferred from homology"/>
<gene>
    <name type="primary">ilvE</name>
    <name type="ordered locus">SCO5523</name>
    <name type="ORF">SC1C2.04</name>
</gene>
<protein>
    <recommendedName>
        <fullName>Probable branched-chain-amino-acid aminotransferase</fullName>
        <shortName>BCAT</shortName>
        <ecNumber>2.6.1.42</ecNumber>
    </recommendedName>
</protein>
<comment type="function">
    <text evidence="1">Acts on leucine, isoleucine and valine.</text>
</comment>
<comment type="catalytic activity">
    <reaction>
        <text>L-leucine + 2-oxoglutarate = 4-methyl-2-oxopentanoate + L-glutamate</text>
        <dbReference type="Rhea" id="RHEA:18321"/>
        <dbReference type="ChEBI" id="CHEBI:16810"/>
        <dbReference type="ChEBI" id="CHEBI:17865"/>
        <dbReference type="ChEBI" id="CHEBI:29985"/>
        <dbReference type="ChEBI" id="CHEBI:57427"/>
        <dbReference type="EC" id="2.6.1.42"/>
    </reaction>
</comment>
<comment type="catalytic activity">
    <reaction>
        <text>L-isoleucine + 2-oxoglutarate = (S)-3-methyl-2-oxopentanoate + L-glutamate</text>
        <dbReference type="Rhea" id="RHEA:24801"/>
        <dbReference type="ChEBI" id="CHEBI:16810"/>
        <dbReference type="ChEBI" id="CHEBI:29985"/>
        <dbReference type="ChEBI" id="CHEBI:35146"/>
        <dbReference type="ChEBI" id="CHEBI:58045"/>
        <dbReference type="EC" id="2.6.1.42"/>
    </reaction>
</comment>
<comment type="catalytic activity">
    <reaction>
        <text>L-valine + 2-oxoglutarate = 3-methyl-2-oxobutanoate + L-glutamate</text>
        <dbReference type="Rhea" id="RHEA:24813"/>
        <dbReference type="ChEBI" id="CHEBI:11851"/>
        <dbReference type="ChEBI" id="CHEBI:16810"/>
        <dbReference type="ChEBI" id="CHEBI:29985"/>
        <dbReference type="ChEBI" id="CHEBI:57762"/>
        <dbReference type="EC" id="2.6.1.42"/>
    </reaction>
</comment>
<comment type="cofactor">
    <cofactor>
        <name>pyridoxal 5'-phosphate</name>
        <dbReference type="ChEBI" id="CHEBI:597326"/>
    </cofactor>
</comment>
<comment type="pathway">
    <text>Amino-acid biosynthesis; L-isoleucine biosynthesis; L-isoleucine from 2-oxobutanoate: step 4/4.</text>
</comment>
<comment type="pathway">
    <text>Amino-acid biosynthesis; L-leucine biosynthesis; L-leucine from 3-methyl-2-oxobutanoate: step 4/4.</text>
</comment>
<comment type="pathway">
    <text>Amino-acid biosynthesis; L-valine biosynthesis; L-valine from pyruvate: step 4/4.</text>
</comment>
<comment type="similarity">
    <text evidence="2">Belongs to the class-IV pyridoxal-phosphate-dependent aminotransferase family.</text>
</comment>
<organism>
    <name type="scientific">Streptomyces coelicolor (strain ATCC BAA-471 / A3(2) / M145)</name>
    <dbReference type="NCBI Taxonomy" id="100226"/>
    <lineage>
        <taxon>Bacteria</taxon>
        <taxon>Bacillati</taxon>
        <taxon>Actinomycetota</taxon>
        <taxon>Actinomycetes</taxon>
        <taxon>Kitasatosporales</taxon>
        <taxon>Streptomycetaceae</taxon>
        <taxon>Streptomyces</taxon>
        <taxon>Streptomyces albidoflavus group</taxon>
    </lineage>
</organism>
<feature type="chain" id="PRO_0000103285" description="Probable branched-chain-amino-acid aminotransferase">
    <location>
        <begin position="1"/>
        <end position="362"/>
    </location>
</feature>
<feature type="modified residue" description="N6-(pyridoxal phosphate)lysine" evidence="1">
    <location>
        <position position="202"/>
    </location>
</feature>
<keyword id="KW-0028">Amino-acid biosynthesis</keyword>
<keyword id="KW-0032">Aminotransferase</keyword>
<keyword id="KW-0100">Branched-chain amino acid biosynthesis</keyword>
<keyword id="KW-0663">Pyridoxal phosphate</keyword>
<keyword id="KW-1185">Reference proteome</keyword>
<keyword id="KW-0808">Transferase</keyword>
<sequence>MTTPTIELKPSAHPLSDSERAAILANPGFGRHFTDHMVTIKWTEGRGWHDGQLVPYAPLSLDPATMVLHYAQEIFEGLKAYRRPDGSVATFRPEKNGARFQASSRRLGMPELPVDTFIEACDALVAQDEKWVPAHGGEESLYLRPFMIATEVGLGVRPANEYLFIVIASPAGAYFPGGVKPVSIWVSEDRVRAVPGGMGDAKTGGNYAASLLAQAEAAAKGCDQVCYLDAIERKWVEELGGMNLYFVYGNKIVTPSLTGSILEGVTRDSLLTVARDLGYEAEEGRVSVDQWQRDSENGTLTEVFACGTAAVITPVGTVKRAGAQWQQSGGETGEVTQRLRDALLDIQRGTVADPHGWMHTLA</sequence>